<proteinExistence type="inferred from homology"/>
<protein>
    <recommendedName>
        <fullName evidence="1">Photosystem I P700 chlorophyll a apoprotein A1</fullName>
        <ecNumber evidence="1">1.97.1.12</ecNumber>
    </recommendedName>
    <alternativeName>
        <fullName evidence="1">PsaA</fullName>
    </alternativeName>
</protein>
<comment type="function">
    <text evidence="1">PsaA and PsaB bind P700, the primary electron donor of photosystem I (PSI), as well as the electron acceptors A0, A1 and FX. PSI is a plastocyanin/cytochrome c6-ferredoxin oxidoreductase, converting photonic excitation into a charge separation, which transfers an electron from the donor P700 chlorophyll pair to the spectroscopically characterized acceptors A0, A1, FX, FA and FB in turn. Oxidized P700 is reduced on the lumenal side of the thylakoid membrane by plastocyanin or cytochrome c6.</text>
</comment>
<comment type="catalytic activity">
    <reaction evidence="1">
        <text>reduced [plastocyanin] + hnu + oxidized [2Fe-2S]-[ferredoxin] = oxidized [plastocyanin] + reduced [2Fe-2S]-[ferredoxin]</text>
        <dbReference type="Rhea" id="RHEA:30407"/>
        <dbReference type="Rhea" id="RHEA-COMP:10000"/>
        <dbReference type="Rhea" id="RHEA-COMP:10001"/>
        <dbReference type="Rhea" id="RHEA-COMP:10039"/>
        <dbReference type="Rhea" id="RHEA-COMP:10040"/>
        <dbReference type="ChEBI" id="CHEBI:29036"/>
        <dbReference type="ChEBI" id="CHEBI:30212"/>
        <dbReference type="ChEBI" id="CHEBI:33737"/>
        <dbReference type="ChEBI" id="CHEBI:33738"/>
        <dbReference type="ChEBI" id="CHEBI:49552"/>
        <dbReference type="EC" id="1.97.1.12"/>
    </reaction>
</comment>
<comment type="cofactor">
    <text evidence="1">PSI electron transfer chain: 5 divinyl chlorophyll a, 1 divinyl chlorophyll a', 2 phylloquinones and 3 4Fe-4S clusters. PSI core antenna: 90 divinyl chlorophyll a, 22 carotenoids, 3 phospholipids and 1 galactolipid. P700 is a divinyl chlorophyll a/divinyl chlorophyll a' dimer, A0 is one or more divinyl chlorophyll a, A1 is one or both phylloquinones and FX is a shared 4Fe-4S iron-sulfur center.</text>
</comment>
<comment type="subunit">
    <text evidence="1">The PsaA/B heterodimer binds the P700 divinyl chlorophyll special pair and subsequent electron acceptors. PSI consists of a core antenna complex that captures photons, and an electron transfer chain that converts photonic excitation into a charge separation. The cyanobacterial PSI reaction center is composed of one copy each of PsaA,B,C,D,E,F,I,J,K,L,M and X, and forms trimeric complexes.</text>
</comment>
<comment type="subcellular location">
    <subcellularLocation>
        <location evidence="1">Cellular thylakoid membrane</location>
        <topology evidence="1">Multi-pass membrane protein</topology>
    </subcellularLocation>
</comment>
<comment type="similarity">
    <text evidence="1">Belongs to the PsaA/PsaB family.</text>
</comment>
<organism>
    <name type="scientific">Prochlorococcus marinus (strain NATL2A)</name>
    <dbReference type="NCBI Taxonomy" id="59920"/>
    <lineage>
        <taxon>Bacteria</taxon>
        <taxon>Bacillati</taxon>
        <taxon>Cyanobacteriota</taxon>
        <taxon>Cyanophyceae</taxon>
        <taxon>Synechococcales</taxon>
        <taxon>Prochlorococcaceae</taxon>
        <taxon>Prochlorococcus</taxon>
    </lineage>
</organism>
<reference key="1">
    <citation type="journal article" date="2007" name="PLoS Genet.">
        <title>Patterns and implications of gene gain and loss in the evolution of Prochlorococcus.</title>
        <authorList>
            <person name="Kettler G.C."/>
            <person name="Martiny A.C."/>
            <person name="Huang K."/>
            <person name="Zucker J."/>
            <person name="Coleman M.L."/>
            <person name="Rodrigue S."/>
            <person name="Chen F."/>
            <person name="Lapidus A."/>
            <person name="Ferriera S."/>
            <person name="Johnson J."/>
            <person name="Steglich C."/>
            <person name="Church G.M."/>
            <person name="Richardson P."/>
            <person name="Chisholm S.W."/>
        </authorList>
    </citation>
    <scope>NUCLEOTIDE SEQUENCE [LARGE SCALE GENOMIC DNA]</scope>
    <source>
        <strain>NATL2A</strain>
    </source>
</reference>
<feature type="chain" id="PRO_0000294205" description="Photosystem I P700 chlorophyll a apoprotein A1">
    <location>
        <begin position="1"/>
        <end position="768"/>
    </location>
</feature>
<feature type="transmembrane region" description="Helical; Name=I" evidence="1">
    <location>
        <begin position="76"/>
        <end position="99"/>
    </location>
</feature>
<feature type="transmembrane region" description="Helical; Name=II" evidence="1">
    <location>
        <begin position="162"/>
        <end position="185"/>
    </location>
</feature>
<feature type="transmembrane region" description="Helical; Name=III" evidence="1">
    <location>
        <begin position="201"/>
        <end position="225"/>
    </location>
</feature>
<feature type="transmembrane region" description="Helical; Name=IV" evidence="1">
    <location>
        <begin position="310"/>
        <end position="328"/>
    </location>
</feature>
<feature type="transmembrane region" description="Helical; Name=V" evidence="1">
    <location>
        <begin position="369"/>
        <end position="392"/>
    </location>
</feature>
<feature type="transmembrane region" description="Helical; Name=VI" evidence="1">
    <location>
        <begin position="408"/>
        <end position="434"/>
    </location>
</feature>
<feature type="transmembrane region" description="Helical; Name=VII" evidence="1">
    <location>
        <begin position="456"/>
        <end position="478"/>
    </location>
</feature>
<feature type="transmembrane region" description="Helical; Name=VIII" evidence="1">
    <location>
        <begin position="559"/>
        <end position="577"/>
    </location>
</feature>
<feature type="transmembrane region" description="Helical; Name=IX" evidence="1">
    <location>
        <begin position="617"/>
        <end position="638"/>
    </location>
</feature>
<feature type="transmembrane region" description="Helical; Name=X" evidence="1">
    <location>
        <begin position="682"/>
        <end position="704"/>
    </location>
</feature>
<feature type="transmembrane region" description="Helical; Name=XI" evidence="1">
    <location>
        <begin position="742"/>
        <end position="762"/>
    </location>
</feature>
<feature type="binding site" evidence="1">
    <location>
        <position position="601"/>
    </location>
    <ligand>
        <name>[4Fe-4S] cluster</name>
        <dbReference type="ChEBI" id="CHEBI:49883"/>
        <note>ligand shared between dimeric partners</note>
    </ligand>
</feature>
<feature type="binding site" evidence="1">
    <location>
        <position position="610"/>
    </location>
    <ligand>
        <name>[4Fe-4S] cluster</name>
        <dbReference type="ChEBI" id="CHEBI:49883"/>
        <note>ligand shared between dimeric partners</note>
    </ligand>
</feature>
<feature type="binding site" description="axial binding residue" evidence="1">
    <location>
        <position position="693"/>
    </location>
    <ligand>
        <name>divinylchlorophyll a'</name>
        <dbReference type="ChEBI" id="CHEBI:189420"/>
        <label>A1</label>
    </ligand>
    <ligandPart>
        <name>Mg</name>
        <dbReference type="ChEBI" id="CHEBI:25107"/>
    </ligandPart>
</feature>
<feature type="binding site" description="axial binding residue" evidence="1">
    <location>
        <position position="701"/>
    </location>
    <ligand>
        <name>divinyl chlorophyll a</name>
        <dbReference type="ChEBI" id="CHEBI:73095"/>
        <label>A3</label>
    </ligand>
    <ligandPart>
        <name>Mg</name>
        <dbReference type="ChEBI" id="CHEBI:25107"/>
    </ligandPart>
</feature>
<feature type="binding site" evidence="1">
    <location>
        <position position="709"/>
    </location>
    <ligand>
        <name>divinyl chlorophyll a</name>
        <dbReference type="ChEBI" id="CHEBI:73095"/>
        <label>A3</label>
    </ligand>
</feature>
<feature type="binding site" evidence="1">
    <location>
        <position position="710"/>
    </location>
    <ligand>
        <name>phylloquinone</name>
        <dbReference type="ChEBI" id="CHEBI:18067"/>
        <label>A</label>
    </ligand>
</feature>
<accession>Q46IV6</accession>
<gene>
    <name evidence="1" type="primary">psaA</name>
    <name type="ordered locus">PMN2A_1082</name>
</gene>
<evidence type="ECO:0000255" key="1">
    <source>
        <dbReference type="HAMAP-Rule" id="MF_00458"/>
    </source>
</evidence>
<keyword id="KW-0004">4Fe-4S</keyword>
<keyword id="KW-0148">Chlorophyll</keyword>
<keyword id="KW-0157">Chromophore</keyword>
<keyword id="KW-0249">Electron transport</keyword>
<keyword id="KW-0408">Iron</keyword>
<keyword id="KW-0411">Iron-sulfur</keyword>
<keyword id="KW-0460">Magnesium</keyword>
<keyword id="KW-0472">Membrane</keyword>
<keyword id="KW-0479">Metal-binding</keyword>
<keyword id="KW-0560">Oxidoreductase</keyword>
<keyword id="KW-0602">Photosynthesis</keyword>
<keyword id="KW-0603">Photosystem I</keyword>
<keyword id="KW-1185">Reference proteome</keyword>
<keyword id="KW-0793">Thylakoid</keyword>
<keyword id="KW-0812">Transmembrane</keyword>
<keyword id="KW-1133">Transmembrane helix</keyword>
<keyword id="KW-0813">Transport</keyword>
<sequence>MTISPPEKEQKKEPVLDKPIETDAIPVDFSKLDKPGFWSKSLAKGPKTTTWIWNLHADAHDFDTHVGDLQETSRKVFSAHFGHLAVIFIWMSAAFFHGARFSNYSGWLSDPTHVKPGAQVVWPIVGQEMLNADLGGNYHGIQITSGIFQMWRGWGITNETELMALAIGALLMAAIMLHGGIYHYHKAAPKLDWFRNLESMLNHHIAGLVGLGSIAWAGHCIHIGAPTAALMDAIDAGKPLIIDGIPIASIADMPLPHELCNPAIASQIFPGLAGRTVENFFTTNWWAFSDFLTFKGGLNPVTGSLWMTDISHHHLAFGVLAVLGGHLYRTMFGIGHSLKEILDNHAGDPILFPAPNGHKGIYEFLANSWHAQLGLNLAMIGSLSIIISHHMYAMPPYPYLSIDYPTVLGLFTHHMWIGGLFIVGAAAHAGIAMIRDYDPAVHIDNVLDRILKARDALISHLNWACMFLGFHSFGLYIHNDVMRALGRPADMFSDTGIQLQPVFAQWIQNIHNSAAGSTTLAGANVSLQPGLVSEVFNGSVSQVGGKIGIAPIPLGTADFMIHHIHAFTIHVTLLILLKGVLFARSSRLIPDKANLGFRFPCDGPGRGGTCQVSSWDHVFLGLFWMYNGLSVVIFHFSWKMQSDVWGLTGGNFAQSSITINGWLRDFLWAQSSQVLTSYGQPISMYGLMFLGAHFVWAFSLMFLFSGRGYWQELFESIIWAHNKLNLAPTIQPRALSITQGRAVGAAHFLLGGIATTWAFFHARLIGLG</sequence>
<dbReference type="EC" id="1.97.1.12" evidence="1"/>
<dbReference type="EMBL" id="CP000095">
    <property type="protein sequence ID" value="AAZ58572.1"/>
    <property type="molecule type" value="Genomic_DNA"/>
</dbReference>
<dbReference type="RefSeq" id="WP_011295426.1">
    <property type="nucleotide sequence ID" value="NC_007335.2"/>
</dbReference>
<dbReference type="SMR" id="Q46IV6"/>
<dbReference type="STRING" id="59920.PMN2A_1082"/>
<dbReference type="KEGG" id="pmn:PMN2A_1082"/>
<dbReference type="HOGENOM" id="CLU_016126_1_0_3"/>
<dbReference type="OrthoDB" id="499313at2"/>
<dbReference type="PhylomeDB" id="Q46IV6"/>
<dbReference type="Proteomes" id="UP000002535">
    <property type="component" value="Chromosome"/>
</dbReference>
<dbReference type="GO" id="GO:0009522">
    <property type="term" value="C:photosystem I"/>
    <property type="evidence" value="ECO:0007669"/>
    <property type="project" value="UniProtKB-KW"/>
</dbReference>
<dbReference type="GO" id="GO:0031676">
    <property type="term" value="C:plasma membrane-derived thylakoid membrane"/>
    <property type="evidence" value="ECO:0007669"/>
    <property type="project" value="UniProtKB-SubCell"/>
</dbReference>
<dbReference type="GO" id="GO:0051539">
    <property type="term" value="F:4 iron, 4 sulfur cluster binding"/>
    <property type="evidence" value="ECO:0007669"/>
    <property type="project" value="UniProtKB-KW"/>
</dbReference>
<dbReference type="GO" id="GO:0016168">
    <property type="term" value="F:chlorophyll binding"/>
    <property type="evidence" value="ECO:0007669"/>
    <property type="project" value="UniProtKB-KW"/>
</dbReference>
<dbReference type="GO" id="GO:0009055">
    <property type="term" value="F:electron transfer activity"/>
    <property type="evidence" value="ECO:0007669"/>
    <property type="project" value="UniProtKB-UniRule"/>
</dbReference>
<dbReference type="GO" id="GO:0000287">
    <property type="term" value="F:magnesium ion binding"/>
    <property type="evidence" value="ECO:0007669"/>
    <property type="project" value="UniProtKB-UniRule"/>
</dbReference>
<dbReference type="GO" id="GO:0016491">
    <property type="term" value="F:oxidoreductase activity"/>
    <property type="evidence" value="ECO:0007669"/>
    <property type="project" value="UniProtKB-KW"/>
</dbReference>
<dbReference type="GO" id="GO:0015979">
    <property type="term" value="P:photosynthesis"/>
    <property type="evidence" value="ECO:0007669"/>
    <property type="project" value="UniProtKB-UniRule"/>
</dbReference>
<dbReference type="Gene3D" id="1.20.1130.10">
    <property type="entry name" value="Photosystem I PsaA/PsaB"/>
    <property type="match status" value="1"/>
</dbReference>
<dbReference type="HAMAP" id="MF_00458">
    <property type="entry name" value="PSI_PsaA"/>
    <property type="match status" value="1"/>
</dbReference>
<dbReference type="InterPro" id="IPR006243">
    <property type="entry name" value="PSI_PsaA"/>
</dbReference>
<dbReference type="InterPro" id="IPR001280">
    <property type="entry name" value="PSI_PsaA/B"/>
</dbReference>
<dbReference type="InterPro" id="IPR020586">
    <property type="entry name" value="PSI_PsaA/B_CS"/>
</dbReference>
<dbReference type="InterPro" id="IPR036408">
    <property type="entry name" value="PSI_PsaA/B_sf"/>
</dbReference>
<dbReference type="NCBIfam" id="TIGR01335">
    <property type="entry name" value="psaA"/>
    <property type="match status" value="1"/>
</dbReference>
<dbReference type="PANTHER" id="PTHR30128">
    <property type="entry name" value="OUTER MEMBRANE PROTEIN, OMPA-RELATED"/>
    <property type="match status" value="1"/>
</dbReference>
<dbReference type="PANTHER" id="PTHR30128:SF19">
    <property type="entry name" value="PHOTOSYSTEM I P700 CHLOROPHYLL A APOPROTEIN A1-RELATED"/>
    <property type="match status" value="1"/>
</dbReference>
<dbReference type="Pfam" id="PF00223">
    <property type="entry name" value="PsaA_PsaB"/>
    <property type="match status" value="1"/>
</dbReference>
<dbReference type="PIRSF" id="PIRSF002905">
    <property type="entry name" value="PSI_A"/>
    <property type="match status" value="1"/>
</dbReference>
<dbReference type="PRINTS" id="PR00257">
    <property type="entry name" value="PHOTSYSPSAAB"/>
</dbReference>
<dbReference type="SUPFAM" id="SSF81558">
    <property type="entry name" value="Photosystem I subunits PsaA/PsaB"/>
    <property type="match status" value="1"/>
</dbReference>
<dbReference type="PROSITE" id="PS00419">
    <property type="entry name" value="PHOTOSYSTEM_I_PSAAB"/>
    <property type="match status" value="1"/>
</dbReference>
<name>PSAA_PROMT</name>